<keyword id="KW-0028">Amino-acid biosynthesis</keyword>
<keyword id="KW-0032">Aminotransferase</keyword>
<keyword id="KW-0963">Cytoplasm</keyword>
<keyword id="KW-0663">Pyridoxal phosphate</keyword>
<keyword id="KW-0664">Pyridoxine biosynthesis</keyword>
<keyword id="KW-0718">Serine biosynthesis</keyword>
<keyword id="KW-0808">Transferase</keyword>
<organism>
    <name type="scientific">Acinetobacter baylyi (strain ATCC 33305 / BD413 / ADP1)</name>
    <dbReference type="NCBI Taxonomy" id="62977"/>
    <lineage>
        <taxon>Bacteria</taxon>
        <taxon>Pseudomonadati</taxon>
        <taxon>Pseudomonadota</taxon>
        <taxon>Gammaproteobacteria</taxon>
        <taxon>Moraxellales</taxon>
        <taxon>Moraxellaceae</taxon>
        <taxon>Acinetobacter</taxon>
    </lineage>
</organism>
<proteinExistence type="inferred from homology"/>
<accession>Q6F961</accession>
<dbReference type="EC" id="2.6.1.52" evidence="1"/>
<dbReference type="EMBL" id="CR543861">
    <property type="protein sequence ID" value="CAG69404.1"/>
    <property type="status" value="ALT_INIT"/>
    <property type="molecule type" value="Genomic_DNA"/>
</dbReference>
<dbReference type="RefSeq" id="WP_004928889.1">
    <property type="nucleotide sequence ID" value="NC_005966.1"/>
</dbReference>
<dbReference type="SMR" id="Q6F961"/>
<dbReference type="STRING" id="202950.GCA_001485005_02294"/>
<dbReference type="GeneID" id="45234924"/>
<dbReference type="KEGG" id="aci:ACIAD2647"/>
<dbReference type="eggNOG" id="COG1932">
    <property type="taxonomic scope" value="Bacteria"/>
</dbReference>
<dbReference type="HOGENOM" id="CLU_034866_0_2_6"/>
<dbReference type="OrthoDB" id="9809412at2"/>
<dbReference type="BioCyc" id="ASP62977:ACIAD_RS12035-MONOMER"/>
<dbReference type="UniPathway" id="UPA00135">
    <property type="reaction ID" value="UER00197"/>
</dbReference>
<dbReference type="UniPathway" id="UPA00244">
    <property type="reaction ID" value="UER00311"/>
</dbReference>
<dbReference type="Proteomes" id="UP000000430">
    <property type="component" value="Chromosome"/>
</dbReference>
<dbReference type="GO" id="GO:0005737">
    <property type="term" value="C:cytoplasm"/>
    <property type="evidence" value="ECO:0007669"/>
    <property type="project" value="UniProtKB-SubCell"/>
</dbReference>
<dbReference type="GO" id="GO:0004648">
    <property type="term" value="F:O-phospho-L-serine:2-oxoglutarate aminotransferase activity"/>
    <property type="evidence" value="ECO:0007669"/>
    <property type="project" value="UniProtKB-UniRule"/>
</dbReference>
<dbReference type="GO" id="GO:0030170">
    <property type="term" value="F:pyridoxal phosphate binding"/>
    <property type="evidence" value="ECO:0007669"/>
    <property type="project" value="UniProtKB-UniRule"/>
</dbReference>
<dbReference type="GO" id="GO:0006564">
    <property type="term" value="P:L-serine biosynthetic process"/>
    <property type="evidence" value="ECO:0007669"/>
    <property type="project" value="UniProtKB-UniRule"/>
</dbReference>
<dbReference type="GO" id="GO:0008615">
    <property type="term" value="P:pyridoxine biosynthetic process"/>
    <property type="evidence" value="ECO:0007669"/>
    <property type="project" value="UniProtKB-UniRule"/>
</dbReference>
<dbReference type="CDD" id="cd00611">
    <property type="entry name" value="PSAT_like"/>
    <property type="match status" value="1"/>
</dbReference>
<dbReference type="FunFam" id="3.40.640.10:FF:000010">
    <property type="entry name" value="Phosphoserine aminotransferase"/>
    <property type="match status" value="1"/>
</dbReference>
<dbReference type="FunFam" id="3.90.1150.10:FF:000006">
    <property type="entry name" value="Phosphoserine aminotransferase"/>
    <property type="match status" value="1"/>
</dbReference>
<dbReference type="Gene3D" id="3.90.1150.10">
    <property type="entry name" value="Aspartate Aminotransferase, domain 1"/>
    <property type="match status" value="1"/>
</dbReference>
<dbReference type="Gene3D" id="3.40.640.10">
    <property type="entry name" value="Type I PLP-dependent aspartate aminotransferase-like (Major domain)"/>
    <property type="match status" value="1"/>
</dbReference>
<dbReference type="HAMAP" id="MF_00160">
    <property type="entry name" value="SerC_aminotrans_5"/>
    <property type="match status" value="1"/>
</dbReference>
<dbReference type="InterPro" id="IPR000192">
    <property type="entry name" value="Aminotrans_V_dom"/>
</dbReference>
<dbReference type="InterPro" id="IPR020578">
    <property type="entry name" value="Aminotrans_V_PyrdxlP_BS"/>
</dbReference>
<dbReference type="InterPro" id="IPR022278">
    <property type="entry name" value="Pser_aminoTfrase"/>
</dbReference>
<dbReference type="InterPro" id="IPR015424">
    <property type="entry name" value="PyrdxlP-dep_Trfase"/>
</dbReference>
<dbReference type="InterPro" id="IPR015421">
    <property type="entry name" value="PyrdxlP-dep_Trfase_major"/>
</dbReference>
<dbReference type="InterPro" id="IPR015422">
    <property type="entry name" value="PyrdxlP-dep_Trfase_small"/>
</dbReference>
<dbReference type="NCBIfam" id="NF003764">
    <property type="entry name" value="PRK05355.1"/>
    <property type="match status" value="1"/>
</dbReference>
<dbReference type="NCBIfam" id="TIGR01364">
    <property type="entry name" value="serC_1"/>
    <property type="match status" value="1"/>
</dbReference>
<dbReference type="PANTHER" id="PTHR43247">
    <property type="entry name" value="PHOSPHOSERINE AMINOTRANSFERASE"/>
    <property type="match status" value="1"/>
</dbReference>
<dbReference type="PANTHER" id="PTHR43247:SF1">
    <property type="entry name" value="PHOSPHOSERINE AMINOTRANSFERASE"/>
    <property type="match status" value="1"/>
</dbReference>
<dbReference type="Pfam" id="PF00266">
    <property type="entry name" value="Aminotran_5"/>
    <property type="match status" value="1"/>
</dbReference>
<dbReference type="PIRSF" id="PIRSF000525">
    <property type="entry name" value="SerC"/>
    <property type="match status" value="1"/>
</dbReference>
<dbReference type="SUPFAM" id="SSF53383">
    <property type="entry name" value="PLP-dependent transferases"/>
    <property type="match status" value="1"/>
</dbReference>
<dbReference type="PROSITE" id="PS00595">
    <property type="entry name" value="AA_TRANSFER_CLASS_5"/>
    <property type="match status" value="1"/>
</dbReference>
<name>SERC_ACIAD</name>
<comment type="function">
    <text evidence="1">Catalyzes the reversible conversion of 3-phosphohydroxypyruvate to phosphoserine and of 3-hydroxy-2-oxo-4-phosphonooxybutanoate to phosphohydroxythreonine.</text>
</comment>
<comment type="catalytic activity">
    <reaction evidence="1">
        <text>O-phospho-L-serine + 2-oxoglutarate = 3-phosphooxypyruvate + L-glutamate</text>
        <dbReference type="Rhea" id="RHEA:14329"/>
        <dbReference type="ChEBI" id="CHEBI:16810"/>
        <dbReference type="ChEBI" id="CHEBI:18110"/>
        <dbReference type="ChEBI" id="CHEBI:29985"/>
        <dbReference type="ChEBI" id="CHEBI:57524"/>
        <dbReference type="EC" id="2.6.1.52"/>
    </reaction>
</comment>
<comment type="catalytic activity">
    <reaction evidence="1">
        <text>4-(phosphooxy)-L-threonine + 2-oxoglutarate = (R)-3-hydroxy-2-oxo-4-phosphooxybutanoate + L-glutamate</text>
        <dbReference type="Rhea" id="RHEA:16573"/>
        <dbReference type="ChEBI" id="CHEBI:16810"/>
        <dbReference type="ChEBI" id="CHEBI:29985"/>
        <dbReference type="ChEBI" id="CHEBI:58452"/>
        <dbReference type="ChEBI" id="CHEBI:58538"/>
        <dbReference type="EC" id="2.6.1.52"/>
    </reaction>
</comment>
<comment type="cofactor">
    <cofactor evidence="1">
        <name>pyridoxal 5'-phosphate</name>
        <dbReference type="ChEBI" id="CHEBI:597326"/>
    </cofactor>
    <text evidence="1">Binds 1 pyridoxal phosphate per subunit.</text>
</comment>
<comment type="pathway">
    <text evidence="1">Amino-acid biosynthesis; L-serine biosynthesis; L-serine from 3-phospho-D-glycerate: step 2/3.</text>
</comment>
<comment type="pathway">
    <text evidence="1">Cofactor biosynthesis; pyridoxine 5'-phosphate biosynthesis; pyridoxine 5'-phosphate from D-erythrose 4-phosphate: step 3/5.</text>
</comment>
<comment type="subunit">
    <text evidence="1">Homodimer.</text>
</comment>
<comment type="subcellular location">
    <subcellularLocation>
        <location evidence="1">Cytoplasm</location>
    </subcellularLocation>
</comment>
<comment type="similarity">
    <text evidence="1">Belongs to the class-V pyridoxal-phosphate-dependent aminotransferase family. SerC subfamily.</text>
</comment>
<comment type="sequence caution" evidence="2">
    <conflict type="erroneous initiation">
        <sequence resource="EMBL-CDS" id="CAG69404"/>
    </conflict>
</comment>
<sequence length="359" mass="39329">MRAYNFCAGPAALPTAVLEKAQQELLDWQGKGLSIMEMSHRSKDYVAVAEKAEADLRKLMNIPENYQVLFLQGGASLQFSAIPMNLLGKNSKADYIHTGIWSEKALKEAQRYGDINVIEAGTSIDGKLAIKNQSEWNLSQDAAYVHYAENETIGGIQFADIPDVNVPLVSDLSSSILSAPLDVSKFGLIYAGAQKNIGPAGLTIVIVRDDLLDQSRSDIPSILKYSAQAKNGSMVNTPATYAWYLSGLVFEWLLEQGGVDAIHQVNLEKAKLLYGYIDSSDFYNNPIAVPNRSIMNVPFTLADEALEKLFLQEAEENHLLNLAGHRSVGGMRASIYNAVPLEGVQALVNFMDTFVQKHG</sequence>
<evidence type="ECO:0000255" key="1">
    <source>
        <dbReference type="HAMAP-Rule" id="MF_00160"/>
    </source>
</evidence>
<evidence type="ECO:0000305" key="2"/>
<reference key="1">
    <citation type="journal article" date="2004" name="Nucleic Acids Res.">
        <title>Unique features revealed by the genome sequence of Acinetobacter sp. ADP1, a versatile and naturally transformation competent bacterium.</title>
        <authorList>
            <person name="Barbe V."/>
            <person name="Vallenet D."/>
            <person name="Fonknechten N."/>
            <person name="Kreimeyer A."/>
            <person name="Oztas S."/>
            <person name="Labarre L."/>
            <person name="Cruveiller S."/>
            <person name="Robert C."/>
            <person name="Duprat S."/>
            <person name="Wincker P."/>
            <person name="Ornston L.N."/>
            <person name="Weissenbach J."/>
            <person name="Marliere P."/>
            <person name="Cohen G.N."/>
            <person name="Medigue C."/>
        </authorList>
    </citation>
    <scope>NUCLEOTIDE SEQUENCE [LARGE SCALE GENOMIC DNA]</scope>
    <source>
        <strain>ATCC 33305 / BD413 / ADP1</strain>
    </source>
</reference>
<protein>
    <recommendedName>
        <fullName evidence="1">Phosphoserine aminotransferase</fullName>
        <ecNumber evidence="1">2.6.1.52</ecNumber>
    </recommendedName>
    <alternativeName>
        <fullName evidence="1">Phosphohydroxythreonine aminotransferase</fullName>
        <shortName evidence="1">PSAT</shortName>
    </alternativeName>
</protein>
<gene>
    <name evidence="1" type="primary">serC</name>
    <name type="ordered locus">ACIAD2647</name>
</gene>
<feature type="chain" id="PRO_0000150142" description="Phosphoserine aminotransferase">
    <location>
        <begin position="1"/>
        <end position="359"/>
    </location>
</feature>
<feature type="binding site" evidence="1">
    <location>
        <position position="41"/>
    </location>
    <ligand>
        <name>L-glutamate</name>
        <dbReference type="ChEBI" id="CHEBI:29985"/>
    </ligand>
</feature>
<feature type="binding site" evidence="1">
    <location>
        <begin position="75"/>
        <end position="76"/>
    </location>
    <ligand>
        <name>pyridoxal 5'-phosphate</name>
        <dbReference type="ChEBI" id="CHEBI:597326"/>
    </ligand>
</feature>
<feature type="binding site" evidence="1">
    <location>
        <position position="101"/>
    </location>
    <ligand>
        <name>pyridoxal 5'-phosphate</name>
        <dbReference type="ChEBI" id="CHEBI:597326"/>
    </ligand>
</feature>
<feature type="binding site" evidence="1">
    <location>
        <position position="152"/>
    </location>
    <ligand>
        <name>pyridoxal 5'-phosphate</name>
        <dbReference type="ChEBI" id="CHEBI:597326"/>
    </ligand>
</feature>
<feature type="binding site" evidence="1">
    <location>
        <position position="171"/>
    </location>
    <ligand>
        <name>pyridoxal 5'-phosphate</name>
        <dbReference type="ChEBI" id="CHEBI:597326"/>
    </ligand>
</feature>
<feature type="binding site" evidence="1">
    <location>
        <position position="194"/>
    </location>
    <ligand>
        <name>pyridoxal 5'-phosphate</name>
        <dbReference type="ChEBI" id="CHEBI:597326"/>
    </ligand>
</feature>
<feature type="binding site" evidence="1">
    <location>
        <begin position="236"/>
        <end position="237"/>
    </location>
    <ligand>
        <name>pyridoxal 5'-phosphate</name>
        <dbReference type="ChEBI" id="CHEBI:597326"/>
    </ligand>
</feature>
<feature type="modified residue" description="N6-(pyridoxal phosphate)lysine" evidence="1">
    <location>
        <position position="195"/>
    </location>
</feature>